<gene>
    <name evidence="1" type="primary">rpl30e</name>
    <name type="ordered locus">Pcal_2094</name>
</gene>
<accession>A3MXZ2</accession>
<proteinExistence type="evidence at protein level"/>
<protein>
    <recommendedName>
        <fullName evidence="1">Large ribosomal subunit protein eL30</fullName>
    </recommendedName>
    <alternativeName>
        <fullName evidence="2">50S ribosomal protein L30e</fullName>
    </alternativeName>
</protein>
<reference key="1">
    <citation type="submission" date="2007-02" db="EMBL/GenBank/DDBJ databases">
        <title>Complete sequence of Pyrobaculum calidifontis JCM 11548.</title>
        <authorList>
            <consortium name="US DOE Joint Genome Institute"/>
            <person name="Copeland A."/>
            <person name="Lucas S."/>
            <person name="Lapidus A."/>
            <person name="Barry K."/>
            <person name="Glavina del Rio T."/>
            <person name="Dalin E."/>
            <person name="Tice H."/>
            <person name="Pitluck S."/>
            <person name="Chain P."/>
            <person name="Malfatti S."/>
            <person name="Shin M."/>
            <person name="Vergez L."/>
            <person name="Schmutz J."/>
            <person name="Larimer F."/>
            <person name="Land M."/>
            <person name="Hauser L."/>
            <person name="Kyrpides N."/>
            <person name="Mikhailova N."/>
            <person name="Cozen A.E."/>
            <person name="Fitz-Gibbon S.T."/>
            <person name="House C.H."/>
            <person name="Saltikov C."/>
            <person name="Lowe T.M."/>
            <person name="Richardson P."/>
        </authorList>
    </citation>
    <scope>NUCLEOTIDE SEQUENCE [LARGE SCALE GENOMIC DNA]</scope>
    <source>
        <strain>DSM 21063 / JCM 11548 / VA1</strain>
    </source>
</reference>
<comment type="similarity">
    <text evidence="1">Belongs to the eukaryotic ribosomal protein eL30 family.</text>
</comment>
<keyword id="KW-0002">3D-structure</keyword>
<keyword id="KW-0687">Ribonucleoprotein</keyword>
<keyword id="KW-0689">Ribosomal protein</keyword>
<feature type="chain" id="PRO_1000014327" description="Large ribosomal subunit protein eL30">
    <location>
        <begin position="1"/>
        <end position="101"/>
    </location>
</feature>
<organism>
    <name type="scientific">Pyrobaculum calidifontis (strain DSM 21063 / JCM 11548 / VA1)</name>
    <dbReference type="NCBI Taxonomy" id="410359"/>
    <lineage>
        <taxon>Archaea</taxon>
        <taxon>Thermoproteota</taxon>
        <taxon>Thermoprotei</taxon>
        <taxon>Thermoproteales</taxon>
        <taxon>Thermoproteaceae</taxon>
        <taxon>Pyrobaculum</taxon>
    </lineage>
</organism>
<dbReference type="EMBL" id="CP000561">
    <property type="protein sequence ID" value="ABO09509.1"/>
    <property type="molecule type" value="Genomic_DNA"/>
</dbReference>
<dbReference type="RefSeq" id="WP_011850767.1">
    <property type="nucleotide sequence ID" value="NC_009073.1"/>
</dbReference>
<dbReference type="PDB" id="9E6Q">
    <property type="method" value="EM"/>
    <property type="resolution" value="1.95 A"/>
    <property type="chains" value="AZ=1-101"/>
</dbReference>
<dbReference type="PDB" id="9E71">
    <property type="method" value="EM"/>
    <property type="resolution" value="2.36 A"/>
    <property type="chains" value="AZ=1-101"/>
</dbReference>
<dbReference type="PDB" id="9E7F">
    <property type="method" value="EM"/>
    <property type="resolution" value="2.53 A"/>
    <property type="chains" value="AZ=1-101"/>
</dbReference>
<dbReference type="PDBsum" id="9E6Q"/>
<dbReference type="PDBsum" id="9E71"/>
<dbReference type="PDBsum" id="9E7F"/>
<dbReference type="EMDB" id="EMD-47578"/>
<dbReference type="EMDB" id="EMD-47628"/>
<dbReference type="EMDB" id="EMD-47668"/>
<dbReference type="SMR" id="A3MXZ2"/>
<dbReference type="STRING" id="410359.Pcal_2094"/>
<dbReference type="GeneID" id="4910118"/>
<dbReference type="KEGG" id="pcl:Pcal_2094"/>
<dbReference type="eggNOG" id="arCOG01752">
    <property type="taxonomic scope" value="Archaea"/>
</dbReference>
<dbReference type="HOGENOM" id="CLU_130502_1_0_2"/>
<dbReference type="OrthoDB" id="10759at2157"/>
<dbReference type="Proteomes" id="UP000001431">
    <property type="component" value="Chromosome"/>
</dbReference>
<dbReference type="GO" id="GO:0022625">
    <property type="term" value="C:cytosolic large ribosomal subunit"/>
    <property type="evidence" value="ECO:0007669"/>
    <property type="project" value="InterPro"/>
</dbReference>
<dbReference type="GO" id="GO:0003723">
    <property type="term" value="F:RNA binding"/>
    <property type="evidence" value="ECO:0007669"/>
    <property type="project" value="InterPro"/>
</dbReference>
<dbReference type="GO" id="GO:0003735">
    <property type="term" value="F:structural constituent of ribosome"/>
    <property type="evidence" value="ECO:0007669"/>
    <property type="project" value="InterPro"/>
</dbReference>
<dbReference type="GO" id="GO:0006412">
    <property type="term" value="P:translation"/>
    <property type="evidence" value="ECO:0007669"/>
    <property type="project" value="UniProtKB-UniRule"/>
</dbReference>
<dbReference type="Gene3D" id="3.30.1330.30">
    <property type="match status" value="1"/>
</dbReference>
<dbReference type="HAMAP" id="MF_00481">
    <property type="entry name" value="Ribosomal_eL30"/>
    <property type="match status" value="1"/>
</dbReference>
<dbReference type="InterPro" id="IPR000231">
    <property type="entry name" value="Ribosomal_eL30"/>
</dbReference>
<dbReference type="InterPro" id="IPR039109">
    <property type="entry name" value="Ribosomal_eL30-like"/>
</dbReference>
<dbReference type="InterPro" id="IPR029064">
    <property type="entry name" value="Ribosomal_eL30-like_sf"/>
</dbReference>
<dbReference type="InterPro" id="IPR022991">
    <property type="entry name" value="Ribosomal_eL30_CS"/>
</dbReference>
<dbReference type="InterPro" id="IPR004038">
    <property type="entry name" value="Ribosomal_eL8/eL30/eS12/Gad45"/>
</dbReference>
<dbReference type="NCBIfam" id="NF002172">
    <property type="entry name" value="PRK01018.1"/>
    <property type="match status" value="1"/>
</dbReference>
<dbReference type="PANTHER" id="PTHR11449">
    <property type="entry name" value="RIBOSOMAL PROTEIN L30"/>
    <property type="match status" value="1"/>
</dbReference>
<dbReference type="Pfam" id="PF01248">
    <property type="entry name" value="Ribosomal_L7Ae"/>
    <property type="match status" value="1"/>
</dbReference>
<dbReference type="SUPFAM" id="SSF55315">
    <property type="entry name" value="L30e-like"/>
    <property type="match status" value="1"/>
</dbReference>
<dbReference type="PROSITE" id="PS00993">
    <property type="entry name" value="RIBOSOMAL_L30E_2"/>
    <property type="match status" value="1"/>
</dbReference>
<sequence length="101" mass="10872">MIDIGRELQVAINTGKVIIGLRETKKSLLTGAPKLVIIAANAPRWAREDIEYYAKLAGVPIFTFPGSSIELGAAAKRPHKIMALAVVDPGQSEILKLVEHA</sequence>
<evidence type="ECO:0000255" key="1">
    <source>
        <dbReference type="HAMAP-Rule" id="MF_00481"/>
    </source>
</evidence>
<evidence type="ECO:0000305" key="2"/>
<name>RL30E_PYRCJ</name>